<evidence type="ECO:0000269" key="1">
    <source>
    </source>
</evidence>
<evidence type="ECO:0000305" key="2"/>
<keyword id="KW-0903">Direct protein sequencing</keyword>
<keyword id="KW-1015">Disulfide bond</keyword>
<keyword id="KW-0960">Knottin</keyword>
<keyword id="KW-0528">Neurotoxin</keyword>
<keyword id="KW-0964">Secreted</keyword>
<keyword id="KW-0800">Toxin</keyword>
<dbReference type="SMR" id="P84031"/>
<dbReference type="ArachnoServer" id="AS000231">
    <property type="toxin name" value="U7-ctenitoxin-Pr1a"/>
</dbReference>
<dbReference type="GO" id="GO:0005576">
    <property type="term" value="C:extracellular region"/>
    <property type="evidence" value="ECO:0007669"/>
    <property type="project" value="UniProtKB-SubCell"/>
</dbReference>
<dbReference type="GO" id="GO:0090729">
    <property type="term" value="F:toxin activity"/>
    <property type="evidence" value="ECO:0007669"/>
    <property type="project" value="UniProtKB-KW"/>
</dbReference>
<accession>P84031</accession>
<proteinExistence type="evidence at protein level"/>
<organism>
    <name type="scientific">Phoneutria reidyi</name>
    <name type="common">Brazilian Amazonian armed spider</name>
    <name type="synonym">Ctenus reidyi</name>
    <dbReference type="NCBI Taxonomy" id="272752"/>
    <lineage>
        <taxon>Eukaryota</taxon>
        <taxon>Metazoa</taxon>
        <taxon>Ecdysozoa</taxon>
        <taxon>Arthropoda</taxon>
        <taxon>Chelicerata</taxon>
        <taxon>Arachnida</taxon>
        <taxon>Araneae</taxon>
        <taxon>Araneomorphae</taxon>
        <taxon>Entelegynae</taxon>
        <taxon>Lycosoidea</taxon>
        <taxon>Ctenidae</taxon>
        <taxon>Phoneutria</taxon>
    </lineage>
</organism>
<feature type="chain" id="PRO_0000087636" description="U7-ctenitoxin-Pr1a">
    <location>
        <begin position="1"/>
        <end position="58"/>
    </location>
</feature>
<feature type="disulfide bond" evidence="2">
    <location>
        <begin position="2"/>
        <end position="16"/>
    </location>
</feature>
<feature type="disulfide bond" evidence="2">
    <location>
        <begin position="9"/>
        <end position="22"/>
    </location>
</feature>
<feature type="disulfide bond" evidence="2">
    <location>
        <begin position="13"/>
        <end position="48"/>
    </location>
</feature>
<feature type="disulfide bond" evidence="2">
    <location>
        <begin position="15"/>
        <end position="40"/>
    </location>
</feature>
<feature type="disulfide bond" evidence="2">
    <location>
        <begin position="18"/>
        <end position="55"/>
    </location>
</feature>
<feature type="disulfide bond" evidence="2">
    <location>
        <begin position="24"/>
        <end position="38"/>
    </location>
</feature>
<sequence length="58" mass="6560">GCKARGDTCQKDCDCCGCFYKCHCPLDWFGGKWHPLGCSCVYGDKYICEKKKKECPNV</sequence>
<comment type="function">
    <text evidence="1">Probable neurotoxin.</text>
</comment>
<comment type="subcellular location">
    <subcellularLocation>
        <location evidence="1">Secreted</location>
    </subcellularLocation>
</comment>
<comment type="tissue specificity">
    <text evidence="1">Expressed by the venom gland.</text>
</comment>
<comment type="domain">
    <text evidence="2">The presence of a 'disulfide through disulfide knot' structurally defines this protein as a knottin.</text>
</comment>
<comment type="mass spectrometry" mass="6549.1" error="0.05" method="Electrospray" evidence="1"/>
<comment type="similarity">
    <text evidence="2">Belongs to the neurotoxin 09 (Tx3-6) family.</text>
</comment>
<reference evidence="2" key="1">
    <citation type="journal article" date="2006" name="Comp. Biochem. Physiol.">
        <title>Comparison of the partial proteomes of the venoms of Brazilian spiders of the genus Phoneutria.</title>
        <authorList>
            <person name="Richardson M."/>
            <person name="Pimenta A.M."/>
            <person name="Bemquerer M.P."/>
            <person name="Santoro M.M."/>
            <person name="Beirao P.S."/>
            <person name="Lima M.E."/>
            <person name="Figueiredo S.G."/>
            <person name="Bloch C. Jr."/>
            <person name="Vasconcelos E.A."/>
            <person name="Campos F.A."/>
            <person name="Gomes P.C."/>
            <person name="Cordeiro M.N."/>
        </authorList>
    </citation>
    <scope>PROTEIN SEQUENCE</scope>
    <scope>SUBCELLULAR LOCATION</scope>
    <scope>TISSUE SPECIFICITY</scope>
    <scope>MASS SPECTROMETRY</scope>
    <source>
        <tissue evidence="1">Venom</tissue>
    </source>
</reference>
<protein>
    <recommendedName>
        <fullName>U7-ctenitoxin-Pr1a</fullName>
        <shortName>U7-CNTX-Pr1a</shortName>
    </recommendedName>
    <alternativeName>
        <fullName>PRTx19</fullName>
    </alternativeName>
    <alternativeName>
        <fullName>Probable neurotoxin PRTx20C1</fullName>
    </alternativeName>
</protein>
<name>TX90B_PHORI</name>